<accession>Q5EHP4</accession>
<proteinExistence type="inferred from homology"/>
<feature type="signal peptide" evidence="2">
    <location>
        <begin position="1"/>
        <end position="24"/>
    </location>
</feature>
<feature type="propeptide" id="PRO_0000289873" evidence="5">
    <location>
        <begin position="25"/>
        <end position="55"/>
    </location>
</feature>
<feature type="peptide" id="PRO_0000289874" description="Conotoxin Lp3.2" evidence="5">
    <location>
        <begin position="56"/>
        <end position="70"/>
    </location>
</feature>
<feature type="disulfide bond" evidence="1">
    <location>
        <begin position="56"/>
        <end position="68"/>
    </location>
</feature>
<feature type="disulfide bond" evidence="1">
    <location>
        <begin position="57"/>
        <end position="66"/>
    </location>
</feature>
<feature type="disulfide bond" evidence="1">
    <location>
        <begin position="62"/>
        <end position="69"/>
    </location>
</feature>
<dbReference type="EMBL" id="AY880682">
    <property type="protein sequence ID" value="AAW78559.1"/>
    <property type="molecule type" value="mRNA"/>
</dbReference>
<dbReference type="ConoServer" id="1080">
    <property type="toxin name" value="Lp3.2 precursor"/>
</dbReference>
<dbReference type="GO" id="GO:0005576">
    <property type="term" value="C:extracellular region"/>
    <property type="evidence" value="ECO:0007669"/>
    <property type="project" value="UniProtKB-SubCell"/>
</dbReference>
<dbReference type="GO" id="GO:0008200">
    <property type="term" value="F:ion channel inhibitor activity"/>
    <property type="evidence" value="ECO:0007669"/>
    <property type="project" value="InterPro"/>
</dbReference>
<dbReference type="GO" id="GO:0090729">
    <property type="term" value="F:toxin activity"/>
    <property type="evidence" value="ECO:0007669"/>
    <property type="project" value="UniProtKB-KW"/>
</dbReference>
<dbReference type="InterPro" id="IPR004214">
    <property type="entry name" value="Conotoxin"/>
</dbReference>
<dbReference type="Pfam" id="PF02950">
    <property type="entry name" value="Conotoxin"/>
    <property type="match status" value="1"/>
</dbReference>
<organism>
    <name type="scientific">Conus leopardus</name>
    <name type="common">Leopard cone</name>
    <dbReference type="NCBI Taxonomy" id="101306"/>
    <lineage>
        <taxon>Eukaryota</taxon>
        <taxon>Metazoa</taxon>
        <taxon>Spiralia</taxon>
        <taxon>Lophotrochozoa</taxon>
        <taxon>Mollusca</taxon>
        <taxon>Gastropoda</taxon>
        <taxon>Caenogastropoda</taxon>
        <taxon>Neogastropoda</taxon>
        <taxon>Conoidea</taxon>
        <taxon>Conidae</taxon>
        <taxon>Conus</taxon>
        <taxon>Lithoconus</taxon>
    </lineage>
</organism>
<sequence>MLKMGVVLFTFLVLFPLATLQLDADQPVERYAENKQDLNPNERMKMIMSALGQRRCCISPACHEECYCCQ</sequence>
<reference key="1">
    <citation type="journal article" date="2006" name="FEBS J.">
        <title>Characterization of novel M-superfamily conotoxins with new disulfide linkage.</title>
        <authorList>
            <person name="Han Y.-H."/>
            <person name="Wang Q."/>
            <person name="Jiang H."/>
            <person name="Liu L."/>
            <person name="Xiao C."/>
            <person name="Yuan D.-D."/>
            <person name="Shao X.-X."/>
            <person name="Dai Q.-Y."/>
            <person name="Cheng J.-S."/>
            <person name="Chi C.-W."/>
        </authorList>
    </citation>
    <scope>NUCLEOTIDE SEQUENCE [MRNA]</scope>
    <source>
        <tissue>Venom duct</tissue>
    </source>
</reference>
<keyword id="KW-0165">Cleavage on pair of basic residues</keyword>
<keyword id="KW-1015">Disulfide bond</keyword>
<keyword id="KW-0964">Secreted</keyword>
<keyword id="KW-0732">Signal</keyword>
<keyword id="KW-0800">Toxin</keyword>
<comment type="subcellular location">
    <subcellularLocation>
        <location evidence="4">Secreted</location>
    </subcellularLocation>
</comment>
<comment type="tissue specificity">
    <text evidence="5">Expressed by the venom duct.</text>
</comment>
<comment type="domain">
    <text evidence="4">The cysteine framework is III (CC-C-C-CC). Classified in the M-1 branch, since 1 residue stands between the fourth and the fifth cysteine residues.</text>
</comment>
<comment type="similarity">
    <text evidence="4">Belongs to the conotoxin M superfamily.</text>
</comment>
<evidence type="ECO:0000250" key="1">
    <source>
        <dbReference type="UniProtKB" id="Q5EHP3"/>
    </source>
</evidence>
<evidence type="ECO:0000255" key="2"/>
<evidence type="ECO:0000303" key="3">
    <source>
    </source>
</evidence>
<evidence type="ECO:0000305" key="4"/>
<evidence type="ECO:0000305" key="5">
    <source>
    </source>
</evidence>
<protein>
    <recommendedName>
        <fullName evidence="3">Conotoxin Lp3.2</fullName>
    </recommendedName>
</protein>
<name>CM32_CONLE</name>